<proteinExistence type="predicted"/>
<accession>Q54L72</accession>
<organism>
    <name type="scientific">Dictyostelium discoideum</name>
    <name type="common">Social amoeba</name>
    <dbReference type="NCBI Taxonomy" id="44689"/>
    <lineage>
        <taxon>Eukaryota</taxon>
        <taxon>Amoebozoa</taxon>
        <taxon>Evosea</taxon>
        <taxon>Eumycetozoa</taxon>
        <taxon>Dictyostelia</taxon>
        <taxon>Dictyosteliales</taxon>
        <taxon>Dictyosteliaceae</taxon>
        <taxon>Dictyostelium</taxon>
    </lineage>
</organism>
<protein>
    <recommendedName>
        <fullName>GATA zinc finger domain-containing protein 4</fullName>
    </recommendedName>
</protein>
<dbReference type="EMBL" id="AAFI02000090">
    <property type="protein sequence ID" value="EAL64025.1"/>
    <property type="molecule type" value="Genomic_DNA"/>
</dbReference>
<dbReference type="RefSeq" id="XP_637531.1">
    <property type="nucleotide sequence ID" value="XM_632439.1"/>
</dbReference>
<dbReference type="STRING" id="44689.Q54L72"/>
<dbReference type="PaxDb" id="44689-DDB0220503"/>
<dbReference type="EnsemblProtists" id="EAL64025">
    <property type="protein sequence ID" value="EAL64025"/>
    <property type="gene ID" value="DDB_G0286855"/>
</dbReference>
<dbReference type="GeneID" id="8625829"/>
<dbReference type="KEGG" id="ddi:DDB_G0286855"/>
<dbReference type="dictyBase" id="DDB_G0286855">
    <property type="gene designation" value="gtaD"/>
</dbReference>
<dbReference type="VEuPathDB" id="AmoebaDB:DDB_G0286855"/>
<dbReference type="HOGENOM" id="CLU_514310_0_0_1"/>
<dbReference type="InParanoid" id="Q54L72"/>
<dbReference type="PRO" id="PR:Q54L72"/>
<dbReference type="Proteomes" id="UP000002195">
    <property type="component" value="Chromosome 4"/>
</dbReference>
<dbReference type="GO" id="GO:0043565">
    <property type="term" value="F:sequence-specific DNA binding"/>
    <property type="evidence" value="ECO:0007669"/>
    <property type="project" value="InterPro"/>
</dbReference>
<dbReference type="GO" id="GO:0008270">
    <property type="term" value="F:zinc ion binding"/>
    <property type="evidence" value="ECO:0007669"/>
    <property type="project" value="UniProtKB-KW"/>
</dbReference>
<dbReference type="GO" id="GO:0006355">
    <property type="term" value="P:regulation of DNA-templated transcription"/>
    <property type="evidence" value="ECO:0007669"/>
    <property type="project" value="InterPro"/>
</dbReference>
<dbReference type="InterPro" id="IPR000679">
    <property type="entry name" value="Znf_GATA"/>
</dbReference>
<dbReference type="SUPFAM" id="SSF57716">
    <property type="entry name" value="Glucocorticoid receptor-like (DNA-binding domain)"/>
    <property type="match status" value="1"/>
</dbReference>
<dbReference type="PROSITE" id="PS50114">
    <property type="entry name" value="GATA_ZN_FINGER_2"/>
    <property type="match status" value="1"/>
</dbReference>
<sequence>MSINHFNNNKNNNNKNNKNNEENFWDNTQCNNDRNKFSIDNIINSNYPTANTTTITSTTNQTIQNNVLNSINIKNNESLKNIYYDENLQRKLTSINFLKNLCSVRDQPFNFNEHIKSIQSINSYRKCISNEIFKKNLINNQLSDILIIIEITSFIGDCIFEIFYLNYFQETLEKDILLFSNASETICIPSHHSPSPQFPVYYTENINNATPSTVVSNSPNNYSQPISPQSSQSTTPTIISSNSPLKTRNKNNNNNYNNNNNNNNNNNNNNNNNNNNSNNNNNNNNYFNNNKKNKIGDCNSNNSNNNNNNNHNNNNNNNNYNYNNNNNNNNNNNNNNNNNNNNNNNNNNNNNNNNNNNNNSNNNKNNNNINNNNNNNNNNNNNINNNNNNNSINNIINNNNNFNNNNINNNLFNNNSMNYNKKENYNWESSSSEEDNNNLIKEQSVKKNETVKKQYIPRKSKYVNYERIKKVSLSKSVEPFDTMKRMEKKKPGNCSMCNIKESISWIKTMVNGQLCNACGLKAIRQIKIEN</sequence>
<reference key="1">
    <citation type="journal article" date="2005" name="Nature">
        <title>The genome of the social amoeba Dictyostelium discoideum.</title>
        <authorList>
            <person name="Eichinger L."/>
            <person name="Pachebat J.A."/>
            <person name="Gloeckner G."/>
            <person name="Rajandream M.A."/>
            <person name="Sucgang R."/>
            <person name="Berriman M."/>
            <person name="Song J."/>
            <person name="Olsen R."/>
            <person name="Szafranski K."/>
            <person name="Xu Q."/>
            <person name="Tunggal B."/>
            <person name="Kummerfeld S."/>
            <person name="Madera M."/>
            <person name="Konfortov B.A."/>
            <person name="Rivero F."/>
            <person name="Bankier A.T."/>
            <person name="Lehmann R."/>
            <person name="Hamlin N."/>
            <person name="Davies R."/>
            <person name="Gaudet P."/>
            <person name="Fey P."/>
            <person name="Pilcher K."/>
            <person name="Chen G."/>
            <person name="Saunders D."/>
            <person name="Sodergren E.J."/>
            <person name="Davis P."/>
            <person name="Kerhornou A."/>
            <person name="Nie X."/>
            <person name="Hall N."/>
            <person name="Anjard C."/>
            <person name="Hemphill L."/>
            <person name="Bason N."/>
            <person name="Farbrother P."/>
            <person name="Desany B."/>
            <person name="Just E."/>
            <person name="Morio T."/>
            <person name="Rost R."/>
            <person name="Churcher C.M."/>
            <person name="Cooper J."/>
            <person name="Haydock S."/>
            <person name="van Driessche N."/>
            <person name="Cronin A."/>
            <person name="Goodhead I."/>
            <person name="Muzny D.M."/>
            <person name="Mourier T."/>
            <person name="Pain A."/>
            <person name="Lu M."/>
            <person name="Harper D."/>
            <person name="Lindsay R."/>
            <person name="Hauser H."/>
            <person name="James K.D."/>
            <person name="Quiles M."/>
            <person name="Madan Babu M."/>
            <person name="Saito T."/>
            <person name="Buchrieser C."/>
            <person name="Wardroper A."/>
            <person name="Felder M."/>
            <person name="Thangavelu M."/>
            <person name="Johnson D."/>
            <person name="Knights A."/>
            <person name="Loulseged H."/>
            <person name="Mungall K.L."/>
            <person name="Oliver K."/>
            <person name="Price C."/>
            <person name="Quail M.A."/>
            <person name="Urushihara H."/>
            <person name="Hernandez J."/>
            <person name="Rabbinowitsch E."/>
            <person name="Steffen D."/>
            <person name="Sanders M."/>
            <person name="Ma J."/>
            <person name="Kohara Y."/>
            <person name="Sharp S."/>
            <person name="Simmonds M.N."/>
            <person name="Spiegler S."/>
            <person name="Tivey A."/>
            <person name="Sugano S."/>
            <person name="White B."/>
            <person name="Walker D."/>
            <person name="Woodward J.R."/>
            <person name="Winckler T."/>
            <person name="Tanaka Y."/>
            <person name="Shaulsky G."/>
            <person name="Schleicher M."/>
            <person name="Weinstock G.M."/>
            <person name="Rosenthal A."/>
            <person name="Cox E.C."/>
            <person name="Chisholm R.L."/>
            <person name="Gibbs R.A."/>
            <person name="Loomis W.F."/>
            <person name="Platzer M."/>
            <person name="Kay R.R."/>
            <person name="Williams J.G."/>
            <person name="Dear P.H."/>
            <person name="Noegel A.A."/>
            <person name="Barrell B.G."/>
            <person name="Kuspa A."/>
        </authorList>
    </citation>
    <scope>NUCLEOTIDE SEQUENCE [LARGE SCALE GENOMIC DNA]</scope>
    <source>
        <strain>AX4</strain>
    </source>
</reference>
<keyword id="KW-0479">Metal-binding</keyword>
<keyword id="KW-1185">Reference proteome</keyword>
<keyword id="KW-0862">Zinc</keyword>
<keyword id="KW-0863">Zinc-finger</keyword>
<evidence type="ECO:0000255" key="1">
    <source>
        <dbReference type="PROSITE-ProRule" id="PRU00094"/>
    </source>
</evidence>
<evidence type="ECO:0000256" key="2">
    <source>
        <dbReference type="SAM" id="MobiDB-lite"/>
    </source>
</evidence>
<gene>
    <name type="primary">gtaD</name>
    <name type="ORF">DDB_G0286855</name>
</gene>
<name>GTAD_DICDI</name>
<feature type="chain" id="PRO_0000330437" description="GATA zinc finger domain-containing protein 4">
    <location>
        <begin position="1"/>
        <end position="530"/>
    </location>
</feature>
<feature type="zinc finger region" description="GATA-type" evidence="1">
    <location>
        <begin position="494"/>
        <end position="518"/>
    </location>
</feature>
<feature type="region of interest" description="Disordered" evidence="2">
    <location>
        <begin position="1"/>
        <end position="27"/>
    </location>
</feature>
<feature type="region of interest" description="Disordered" evidence="2">
    <location>
        <begin position="212"/>
        <end position="386"/>
    </location>
</feature>
<feature type="compositionally biased region" description="Low complexity" evidence="2">
    <location>
        <begin position="7"/>
        <end position="17"/>
    </location>
</feature>
<feature type="compositionally biased region" description="Low complexity" evidence="2">
    <location>
        <begin position="216"/>
        <end position="290"/>
    </location>
</feature>
<feature type="compositionally biased region" description="Low complexity" evidence="2">
    <location>
        <begin position="299"/>
        <end position="386"/>
    </location>
</feature>